<evidence type="ECO:0000255" key="1">
    <source>
        <dbReference type="HAMAP-Rule" id="MF_00097"/>
    </source>
</evidence>
<evidence type="ECO:0000305" key="2"/>
<sequence>MHNKNLDCTLYLVTDRDILKGRDLKKVLEEAILGGTTLVQLREKNVSSKEFYEIAKDIKVITDKYNIPLIINDRVDIALAVNAEGIHIGQKDLPANIVRKIIGEDKILGVSANTIEDALKAQRDGADYLGVGAIFPTNSKKDAESTSIETLKEIKNAVNIPIVAIGGINENNVQKLKETNIDGIAVISTILGKEDVKKACEELTGFFNE</sequence>
<accession>Q893R0</accession>
<keyword id="KW-0460">Magnesium</keyword>
<keyword id="KW-0479">Metal-binding</keyword>
<keyword id="KW-1185">Reference proteome</keyword>
<keyword id="KW-0784">Thiamine biosynthesis</keyword>
<keyword id="KW-0808">Transferase</keyword>
<protein>
    <recommendedName>
        <fullName evidence="1">Thiamine-phosphate synthase</fullName>
        <shortName evidence="1">TP synthase</shortName>
        <shortName evidence="1">TPS</shortName>
        <ecNumber evidence="1">2.5.1.3</ecNumber>
    </recommendedName>
    <alternativeName>
        <fullName evidence="1">Thiamine-phosphate pyrophosphorylase</fullName>
        <shortName evidence="1">TMP pyrophosphorylase</shortName>
        <shortName evidence="1">TMP-PPase</shortName>
    </alternativeName>
</protein>
<proteinExistence type="inferred from homology"/>
<dbReference type="EC" id="2.5.1.3" evidence="1"/>
<dbReference type="EMBL" id="AE015927">
    <property type="protein sequence ID" value="AAO36282.1"/>
    <property type="status" value="ALT_INIT"/>
    <property type="molecule type" value="Genomic_DNA"/>
</dbReference>
<dbReference type="RefSeq" id="WP_035109414.1">
    <property type="nucleotide sequence ID" value="NC_004557.1"/>
</dbReference>
<dbReference type="SMR" id="Q893R0"/>
<dbReference type="STRING" id="212717.CTC_01751"/>
<dbReference type="GeneID" id="24253111"/>
<dbReference type="KEGG" id="ctc:CTC_01751"/>
<dbReference type="HOGENOM" id="CLU_018272_3_2_9"/>
<dbReference type="OrthoDB" id="9812206at2"/>
<dbReference type="UniPathway" id="UPA00060">
    <property type="reaction ID" value="UER00141"/>
</dbReference>
<dbReference type="Proteomes" id="UP000001412">
    <property type="component" value="Chromosome"/>
</dbReference>
<dbReference type="GO" id="GO:0005737">
    <property type="term" value="C:cytoplasm"/>
    <property type="evidence" value="ECO:0007669"/>
    <property type="project" value="TreeGrafter"/>
</dbReference>
<dbReference type="GO" id="GO:0000287">
    <property type="term" value="F:magnesium ion binding"/>
    <property type="evidence" value="ECO:0007669"/>
    <property type="project" value="UniProtKB-UniRule"/>
</dbReference>
<dbReference type="GO" id="GO:0004789">
    <property type="term" value="F:thiamine-phosphate diphosphorylase activity"/>
    <property type="evidence" value="ECO:0007669"/>
    <property type="project" value="UniProtKB-UniRule"/>
</dbReference>
<dbReference type="GO" id="GO:0009228">
    <property type="term" value="P:thiamine biosynthetic process"/>
    <property type="evidence" value="ECO:0007669"/>
    <property type="project" value="UniProtKB-KW"/>
</dbReference>
<dbReference type="GO" id="GO:0009229">
    <property type="term" value="P:thiamine diphosphate biosynthetic process"/>
    <property type="evidence" value="ECO:0007669"/>
    <property type="project" value="UniProtKB-UniRule"/>
</dbReference>
<dbReference type="CDD" id="cd00564">
    <property type="entry name" value="TMP_TenI"/>
    <property type="match status" value="1"/>
</dbReference>
<dbReference type="FunFam" id="3.20.20.70:FF:000096">
    <property type="entry name" value="Thiamine-phosphate synthase"/>
    <property type="match status" value="1"/>
</dbReference>
<dbReference type="Gene3D" id="3.20.20.70">
    <property type="entry name" value="Aldolase class I"/>
    <property type="match status" value="1"/>
</dbReference>
<dbReference type="HAMAP" id="MF_00097">
    <property type="entry name" value="TMP_synthase"/>
    <property type="match status" value="1"/>
</dbReference>
<dbReference type="InterPro" id="IPR013785">
    <property type="entry name" value="Aldolase_TIM"/>
</dbReference>
<dbReference type="InterPro" id="IPR036206">
    <property type="entry name" value="ThiamineP_synth_sf"/>
</dbReference>
<dbReference type="InterPro" id="IPR022998">
    <property type="entry name" value="ThiamineP_synth_TenI"/>
</dbReference>
<dbReference type="InterPro" id="IPR034291">
    <property type="entry name" value="TMP_synthase"/>
</dbReference>
<dbReference type="NCBIfam" id="TIGR00693">
    <property type="entry name" value="thiE"/>
    <property type="match status" value="1"/>
</dbReference>
<dbReference type="PANTHER" id="PTHR20857:SF23">
    <property type="entry name" value="THIAMINE BIOSYNTHETIC BIFUNCTIONAL ENZYME"/>
    <property type="match status" value="1"/>
</dbReference>
<dbReference type="PANTHER" id="PTHR20857">
    <property type="entry name" value="THIAMINE-PHOSPHATE PYROPHOSPHORYLASE"/>
    <property type="match status" value="1"/>
</dbReference>
<dbReference type="Pfam" id="PF02581">
    <property type="entry name" value="TMP-TENI"/>
    <property type="match status" value="1"/>
</dbReference>
<dbReference type="SUPFAM" id="SSF51391">
    <property type="entry name" value="Thiamin phosphate synthase"/>
    <property type="match status" value="1"/>
</dbReference>
<gene>
    <name evidence="1" type="primary">thiE</name>
    <name type="ordered locus">CTC_01751</name>
</gene>
<organism>
    <name type="scientific">Clostridium tetani (strain Massachusetts / E88)</name>
    <dbReference type="NCBI Taxonomy" id="212717"/>
    <lineage>
        <taxon>Bacteria</taxon>
        <taxon>Bacillati</taxon>
        <taxon>Bacillota</taxon>
        <taxon>Clostridia</taxon>
        <taxon>Eubacteriales</taxon>
        <taxon>Clostridiaceae</taxon>
        <taxon>Clostridium</taxon>
    </lineage>
</organism>
<comment type="function">
    <text evidence="1">Condenses 4-methyl-5-(beta-hydroxyethyl)thiazole monophosphate (THZ-P) and 2-methyl-4-amino-5-hydroxymethyl pyrimidine pyrophosphate (HMP-PP) to form thiamine monophosphate (TMP).</text>
</comment>
<comment type="catalytic activity">
    <reaction evidence="1">
        <text>2-[(2R,5Z)-2-carboxy-4-methylthiazol-5(2H)-ylidene]ethyl phosphate + 4-amino-2-methyl-5-(diphosphooxymethyl)pyrimidine + 2 H(+) = thiamine phosphate + CO2 + diphosphate</text>
        <dbReference type="Rhea" id="RHEA:47844"/>
        <dbReference type="ChEBI" id="CHEBI:15378"/>
        <dbReference type="ChEBI" id="CHEBI:16526"/>
        <dbReference type="ChEBI" id="CHEBI:33019"/>
        <dbReference type="ChEBI" id="CHEBI:37575"/>
        <dbReference type="ChEBI" id="CHEBI:57841"/>
        <dbReference type="ChEBI" id="CHEBI:62899"/>
        <dbReference type="EC" id="2.5.1.3"/>
    </reaction>
</comment>
<comment type="catalytic activity">
    <reaction evidence="1">
        <text>2-(2-carboxy-4-methylthiazol-5-yl)ethyl phosphate + 4-amino-2-methyl-5-(diphosphooxymethyl)pyrimidine + 2 H(+) = thiamine phosphate + CO2 + diphosphate</text>
        <dbReference type="Rhea" id="RHEA:47848"/>
        <dbReference type="ChEBI" id="CHEBI:15378"/>
        <dbReference type="ChEBI" id="CHEBI:16526"/>
        <dbReference type="ChEBI" id="CHEBI:33019"/>
        <dbReference type="ChEBI" id="CHEBI:37575"/>
        <dbReference type="ChEBI" id="CHEBI:57841"/>
        <dbReference type="ChEBI" id="CHEBI:62890"/>
        <dbReference type="EC" id="2.5.1.3"/>
    </reaction>
</comment>
<comment type="catalytic activity">
    <reaction evidence="1">
        <text>4-methyl-5-(2-phosphooxyethyl)-thiazole + 4-amino-2-methyl-5-(diphosphooxymethyl)pyrimidine + H(+) = thiamine phosphate + diphosphate</text>
        <dbReference type="Rhea" id="RHEA:22328"/>
        <dbReference type="ChEBI" id="CHEBI:15378"/>
        <dbReference type="ChEBI" id="CHEBI:33019"/>
        <dbReference type="ChEBI" id="CHEBI:37575"/>
        <dbReference type="ChEBI" id="CHEBI:57841"/>
        <dbReference type="ChEBI" id="CHEBI:58296"/>
        <dbReference type="EC" id="2.5.1.3"/>
    </reaction>
</comment>
<comment type="cofactor">
    <cofactor evidence="1">
        <name>Mg(2+)</name>
        <dbReference type="ChEBI" id="CHEBI:18420"/>
    </cofactor>
    <text evidence="1">Binds 1 Mg(2+) ion per subunit.</text>
</comment>
<comment type="pathway">
    <text evidence="1">Cofactor biosynthesis; thiamine diphosphate biosynthesis; thiamine phosphate from 4-amino-2-methyl-5-diphosphomethylpyrimidine and 4-methyl-5-(2-phosphoethyl)-thiazole: step 1/1.</text>
</comment>
<comment type="similarity">
    <text evidence="1">Belongs to the thiamine-phosphate synthase family.</text>
</comment>
<comment type="sequence caution" evidence="2">
    <conflict type="erroneous initiation">
        <sequence resource="EMBL-CDS" id="AAO36282"/>
    </conflict>
</comment>
<reference key="1">
    <citation type="journal article" date="2003" name="Proc. Natl. Acad. Sci. U.S.A.">
        <title>The genome sequence of Clostridium tetani, the causative agent of tetanus disease.</title>
        <authorList>
            <person name="Brueggemann H."/>
            <person name="Baeumer S."/>
            <person name="Fricke W.F."/>
            <person name="Wiezer A."/>
            <person name="Liesegang H."/>
            <person name="Decker I."/>
            <person name="Herzberg C."/>
            <person name="Martinez-Arias R."/>
            <person name="Merkl R."/>
            <person name="Henne A."/>
            <person name="Gottschalk G."/>
        </authorList>
    </citation>
    <scope>NUCLEOTIDE SEQUENCE [LARGE SCALE GENOMIC DNA]</scope>
    <source>
        <strain>Massachusetts / E88</strain>
    </source>
</reference>
<name>THIE_CLOTE</name>
<feature type="chain" id="PRO_0000157007" description="Thiamine-phosphate synthase">
    <location>
        <begin position="1"/>
        <end position="209"/>
    </location>
</feature>
<feature type="binding site" evidence="1">
    <location>
        <begin position="40"/>
        <end position="44"/>
    </location>
    <ligand>
        <name>4-amino-2-methyl-5-(diphosphooxymethyl)pyrimidine</name>
        <dbReference type="ChEBI" id="CHEBI:57841"/>
    </ligand>
</feature>
<feature type="binding site" evidence="1">
    <location>
        <position position="72"/>
    </location>
    <ligand>
        <name>4-amino-2-methyl-5-(diphosphooxymethyl)pyrimidine</name>
        <dbReference type="ChEBI" id="CHEBI:57841"/>
    </ligand>
</feature>
<feature type="binding site" evidence="1">
    <location>
        <position position="73"/>
    </location>
    <ligand>
        <name>Mg(2+)</name>
        <dbReference type="ChEBI" id="CHEBI:18420"/>
    </ligand>
</feature>
<feature type="binding site" evidence="1">
    <location>
        <position position="92"/>
    </location>
    <ligand>
        <name>Mg(2+)</name>
        <dbReference type="ChEBI" id="CHEBI:18420"/>
    </ligand>
</feature>
<feature type="binding site" evidence="1">
    <location>
        <position position="111"/>
    </location>
    <ligand>
        <name>4-amino-2-methyl-5-(diphosphooxymethyl)pyrimidine</name>
        <dbReference type="ChEBI" id="CHEBI:57841"/>
    </ligand>
</feature>
<feature type="binding site" evidence="1">
    <location>
        <begin position="137"/>
        <end position="139"/>
    </location>
    <ligand>
        <name>2-[(2R,5Z)-2-carboxy-4-methylthiazol-5(2H)-ylidene]ethyl phosphate</name>
        <dbReference type="ChEBI" id="CHEBI:62899"/>
    </ligand>
</feature>
<feature type="binding site" evidence="1">
    <location>
        <position position="140"/>
    </location>
    <ligand>
        <name>4-amino-2-methyl-5-(diphosphooxymethyl)pyrimidine</name>
        <dbReference type="ChEBI" id="CHEBI:57841"/>
    </ligand>
</feature>
<feature type="binding site" evidence="1">
    <location>
        <position position="167"/>
    </location>
    <ligand>
        <name>2-[(2R,5Z)-2-carboxy-4-methylthiazol-5(2H)-ylidene]ethyl phosphate</name>
        <dbReference type="ChEBI" id="CHEBI:62899"/>
    </ligand>
</feature>
<feature type="binding site" evidence="1">
    <location>
        <begin position="187"/>
        <end position="188"/>
    </location>
    <ligand>
        <name>2-[(2R,5Z)-2-carboxy-4-methylthiazol-5(2H)-ylidene]ethyl phosphate</name>
        <dbReference type="ChEBI" id="CHEBI:62899"/>
    </ligand>
</feature>